<keyword id="KW-0903">Direct protein sequencing</keyword>
<keyword id="KW-1015">Disulfide bond</keyword>
<keyword id="KW-1185">Reference proteome</keyword>
<keyword id="KW-0964">Secreted</keyword>
<keyword id="KW-0732">Signal</keyword>
<dbReference type="EMBL" id="U35712">
    <property type="protein sequence ID" value="AAC52616.1"/>
    <property type="molecule type" value="mRNA"/>
</dbReference>
<dbReference type="RefSeq" id="NP_001166405.1">
    <property type="nucleotide sequence ID" value="NM_001172934.1"/>
</dbReference>
<dbReference type="SMR" id="Q60477"/>
<dbReference type="FunCoup" id="Q60477">
    <property type="interactions" value="86"/>
</dbReference>
<dbReference type="STRING" id="10141.ENSCPOP00000009992"/>
<dbReference type="Ensembl" id="ENSCPOT00000011215.3">
    <property type="protein sequence ID" value="ENSCPOP00000009992.2"/>
    <property type="gene ID" value="ENSCPOG00000011111.4"/>
</dbReference>
<dbReference type="GeneID" id="100135505"/>
<dbReference type="KEGG" id="cpoc:100135505"/>
<dbReference type="CTD" id="7180"/>
<dbReference type="VEuPathDB" id="HostDB:ENSCPOG00000011111"/>
<dbReference type="eggNOG" id="KOG3017">
    <property type="taxonomic scope" value="Eukaryota"/>
</dbReference>
<dbReference type="GeneTree" id="ENSGT00940000156439"/>
<dbReference type="HOGENOM" id="CLU_035730_2_1_1"/>
<dbReference type="InParanoid" id="Q60477"/>
<dbReference type="OMA" id="CTNSCEF"/>
<dbReference type="OrthoDB" id="737510at2759"/>
<dbReference type="TreeFam" id="TF316148"/>
<dbReference type="Proteomes" id="UP000005447">
    <property type="component" value="Unassembled WGS sequence"/>
</dbReference>
<dbReference type="Bgee" id="ENSCPOG00000011111">
    <property type="expression patterns" value="Expressed in testis and 9 other cell types or tissues"/>
</dbReference>
<dbReference type="GO" id="GO:0005576">
    <property type="term" value="C:extracellular region"/>
    <property type="evidence" value="ECO:0007669"/>
    <property type="project" value="UniProtKB-SubCell"/>
</dbReference>
<dbReference type="CDD" id="cd05383">
    <property type="entry name" value="CAP_CRISP"/>
    <property type="match status" value="1"/>
</dbReference>
<dbReference type="FunFam" id="1.10.10.740:FF:000001">
    <property type="entry name" value="Cysteine-rich secretory protein 2"/>
    <property type="match status" value="1"/>
</dbReference>
<dbReference type="FunFam" id="3.40.33.10:FF:000005">
    <property type="entry name" value="Cysteine-rich secretory protein 2"/>
    <property type="match status" value="1"/>
</dbReference>
<dbReference type="Gene3D" id="3.40.33.10">
    <property type="entry name" value="CAP"/>
    <property type="match status" value="1"/>
</dbReference>
<dbReference type="Gene3D" id="1.10.10.740">
    <property type="entry name" value="Crisp domain"/>
    <property type="match status" value="1"/>
</dbReference>
<dbReference type="InterPro" id="IPR018244">
    <property type="entry name" value="Allrgn_V5/Tpx1_CS"/>
</dbReference>
<dbReference type="InterPro" id="IPR014044">
    <property type="entry name" value="CAP_dom"/>
</dbReference>
<dbReference type="InterPro" id="IPR035940">
    <property type="entry name" value="CAP_sf"/>
</dbReference>
<dbReference type="InterPro" id="IPR042076">
    <property type="entry name" value="Crisp-like_dom"/>
</dbReference>
<dbReference type="InterPro" id="IPR001283">
    <property type="entry name" value="CRISP-related"/>
</dbReference>
<dbReference type="InterPro" id="IPR013871">
    <property type="entry name" value="Cysteine_rich_secretory"/>
</dbReference>
<dbReference type="InterPro" id="IPR034117">
    <property type="entry name" value="SCP_CRISP"/>
</dbReference>
<dbReference type="InterPro" id="IPR003582">
    <property type="entry name" value="ShKT_dom"/>
</dbReference>
<dbReference type="PANTHER" id="PTHR10334">
    <property type="entry name" value="CYSTEINE-RICH SECRETORY PROTEIN-RELATED"/>
    <property type="match status" value="1"/>
</dbReference>
<dbReference type="Pfam" id="PF00188">
    <property type="entry name" value="CAP"/>
    <property type="match status" value="1"/>
</dbReference>
<dbReference type="Pfam" id="PF08562">
    <property type="entry name" value="Crisp"/>
    <property type="match status" value="1"/>
</dbReference>
<dbReference type="PRINTS" id="PR00837">
    <property type="entry name" value="V5TPXLIKE"/>
</dbReference>
<dbReference type="SMART" id="SM00198">
    <property type="entry name" value="SCP"/>
    <property type="match status" value="1"/>
</dbReference>
<dbReference type="SUPFAM" id="SSF57546">
    <property type="entry name" value="Crisp domain-like"/>
    <property type="match status" value="1"/>
</dbReference>
<dbReference type="SUPFAM" id="SSF55797">
    <property type="entry name" value="PR-1-like"/>
    <property type="match status" value="1"/>
</dbReference>
<dbReference type="PROSITE" id="PS01009">
    <property type="entry name" value="CRISP_1"/>
    <property type="match status" value="1"/>
</dbReference>
<dbReference type="PROSITE" id="PS01010">
    <property type="entry name" value="CRISP_2"/>
    <property type="match status" value="1"/>
</dbReference>
<dbReference type="PROSITE" id="PS51670">
    <property type="entry name" value="SHKT"/>
    <property type="match status" value="1"/>
</dbReference>
<proteinExistence type="evidence at protein level"/>
<feature type="signal peptide" evidence="3">
    <location>
        <begin position="1"/>
        <end position="21"/>
    </location>
</feature>
<feature type="chain" id="PRO_0000006265" description="Cysteine-rich secretory protein 2">
    <location>
        <begin position="22"/>
        <end position="244"/>
    </location>
</feature>
<feature type="domain" description="SCP">
    <location>
        <begin position="43"/>
        <end position="170"/>
    </location>
</feature>
<feature type="domain" description="ShKT" evidence="2">
    <location>
        <begin position="206"/>
        <end position="239"/>
    </location>
</feature>
<feature type="disulfide bond" evidence="2">
    <location>
        <begin position="190"/>
        <end position="197"/>
    </location>
</feature>
<feature type="disulfide bond" evidence="2">
    <location>
        <begin position="193"/>
        <end position="202"/>
    </location>
</feature>
<feature type="disulfide bond" evidence="2">
    <location>
        <begin position="206"/>
        <end position="239"/>
    </location>
</feature>
<feature type="disulfide bond" evidence="2">
    <location>
        <begin position="215"/>
        <end position="233"/>
    </location>
</feature>
<feature type="disulfide bond" evidence="2">
    <location>
        <begin position="224"/>
        <end position="237"/>
    </location>
</feature>
<name>CRIS2_CAVPO</name>
<gene>
    <name type="primary">CRISP2</name>
    <name type="synonym">TPX1</name>
</gene>
<comment type="function">
    <text evidence="1">May regulate some ion channels' activity and thereby regulate calcium fluxes during sperm capacitation.</text>
</comment>
<comment type="subunit">
    <text evidence="1">Interacts with NSUN4 isoform 3.</text>
</comment>
<comment type="subcellular location">
    <subcellularLocation>
        <location evidence="4">Secreted</location>
    </subcellularLocation>
</comment>
<comment type="tissue specificity">
    <text>Testis.</text>
</comment>
<comment type="similarity">
    <text evidence="4">Belongs to the CRISP family.</text>
</comment>
<protein>
    <recommendedName>
        <fullName>Cysteine-rich secretory protein 2</fullName>
        <shortName>CRISP-2</shortName>
    </recommendedName>
    <alternativeName>
        <fullName>25 kDa acrosomal autoantigen</fullName>
    </alternativeName>
    <alternativeName>
        <fullName>AA1</fullName>
    </alternativeName>
    <alternativeName>
        <fullName>Autoantigen 1</fullName>
    </alternativeName>
    <alternativeName>
        <fullName>Testis-specific protein TPX-1</fullName>
    </alternativeName>
</protein>
<evidence type="ECO:0000250" key="1"/>
<evidence type="ECO:0000255" key="2">
    <source>
        <dbReference type="PROSITE-ProRule" id="PRU01005"/>
    </source>
</evidence>
<evidence type="ECO:0000269" key="3">
    <source>
    </source>
</evidence>
<evidence type="ECO:0000305" key="4"/>
<sequence>MALLPVVVFLITMLLPCVLTNGKDPAFTALITTQSQVQNEIINKHNQLRKSVTPPASNMLKMEWSREAAVNAQKWANRCTLVHSNPDDRKTSTKCGENLYMSSDPSSWSDAIQSWFDESQDFTFGVGPKSHNAVVGHYTQLVWYSSYLVGCGIAYCPNQDSLKYYYVCQYCPAGNNVYTKNTPYKQGIPCASCPGHCENGLCTNSCEYEDLLSNCESLKNTAGCEHQLLVEKCKATCRCEDKIY</sequence>
<reference key="1">
    <citation type="journal article" date="1996" name="Mol. Reprod. Dev.">
        <title>Autoantigen 1 of the guinea pig sperm acrosome is the homologue of mouse Tpx-1 and human TPX1 and is a member of the cysteine-rich secretory protein (CRISP) family.</title>
        <authorList>
            <person name="Foster J.A."/>
            <person name="Gerton G.L."/>
        </authorList>
    </citation>
    <scope>NUCLEOTIDE SEQUENCE [MRNA]</scope>
    <source>
        <strain>Hartley</strain>
        <tissue>Testis</tissue>
    </source>
</reference>
<reference key="2">
    <citation type="journal article" date="1988" name="Biol. Reprod.">
        <title>Purification and characterization of the primary acrosomal autoantigen of guinea pig epididymal spermatozoa.</title>
        <authorList>
            <person name="Hardy D.M."/>
            <person name="Huang T.T.F. Jr."/>
            <person name="Driscoll W.J."/>
            <person name="Tung K.S.K."/>
            <person name="Wild G.C."/>
        </authorList>
    </citation>
    <scope>PROTEIN SEQUENCE OF 22-41</scope>
</reference>
<accession>Q60477</accession>
<organism>
    <name type="scientific">Cavia porcellus</name>
    <name type="common">Guinea pig</name>
    <dbReference type="NCBI Taxonomy" id="10141"/>
    <lineage>
        <taxon>Eukaryota</taxon>
        <taxon>Metazoa</taxon>
        <taxon>Chordata</taxon>
        <taxon>Craniata</taxon>
        <taxon>Vertebrata</taxon>
        <taxon>Euteleostomi</taxon>
        <taxon>Mammalia</taxon>
        <taxon>Eutheria</taxon>
        <taxon>Euarchontoglires</taxon>
        <taxon>Glires</taxon>
        <taxon>Rodentia</taxon>
        <taxon>Hystricomorpha</taxon>
        <taxon>Caviidae</taxon>
        <taxon>Cavia</taxon>
    </lineage>
</organism>